<feature type="chain" id="PRO_1000066436" description="Deoxyguanosinetriphosphate triphosphohydrolase-like protein">
    <location>
        <begin position="1"/>
        <end position="404"/>
    </location>
</feature>
<feature type="domain" description="HD" evidence="2">
    <location>
        <begin position="69"/>
        <end position="217"/>
    </location>
</feature>
<feature type="region of interest" description="Disordered" evidence="3">
    <location>
        <begin position="1"/>
        <end position="33"/>
    </location>
</feature>
<sequence>MSVGMAAPRAAYGCDPDRSRGRQFAEPPSNNRSAFRRDCDRVIHSNAFRRLKHKTQVFVFHEGDHYRTRLTHSLEVAQIARAIARQLGLDEDLTETLALAHDLGHPPFGHAGERALDACLRAHGGFDHNAQTLRVLTALEHRYPEFDGLNLTWETLEGVVKHNGPLTDRAGRPLPRYAERGVPIGIVEFSQRFDLELWSFASLEAQVAAIADDIAYDAHDIDDGLRAGLFRVDDLRAVPLTASIIDGIARRYPALDESRRGAELVRELISHLIGAVTAETMRRLGEAAPRSAEEVRHASSAMVAFPIETAAAEAEIKAFLWTHMYRANRVMAVMRDAEAIVADLFQRYCDHPADLPPDWLPTDGPVAECEADRLRRIRNFIAGMTDRYALTEHQRLFDSTPDLR</sequence>
<protein>
    <recommendedName>
        <fullName evidence="1">Deoxyguanosinetriphosphate triphosphohydrolase-like protein</fullName>
    </recommendedName>
</protein>
<evidence type="ECO:0000255" key="1">
    <source>
        <dbReference type="HAMAP-Rule" id="MF_01212"/>
    </source>
</evidence>
<evidence type="ECO:0000255" key="2">
    <source>
        <dbReference type="PROSITE-ProRule" id="PRU01175"/>
    </source>
</evidence>
<evidence type="ECO:0000256" key="3">
    <source>
        <dbReference type="SAM" id="MobiDB-lite"/>
    </source>
</evidence>
<accession>Q136G5</accession>
<name>DGTL1_RHOPS</name>
<organism>
    <name type="scientific">Rhodopseudomonas palustris (strain BisB5)</name>
    <dbReference type="NCBI Taxonomy" id="316057"/>
    <lineage>
        <taxon>Bacteria</taxon>
        <taxon>Pseudomonadati</taxon>
        <taxon>Pseudomonadota</taxon>
        <taxon>Alphaproteobacteria</taxon>
        <taxon>Hyphomicrobiales</taxon>
        <taxon>Nitrobacteraceae</taxon>
        <taxon>Rhodopseudomonas</taxon>
    </lineage>
</organism>
<dbReference type="EMBL" id="CP000283">
    <property type="protein sequence ID" value="ABE40024.1"/>
    <property type="molecule type" value="Genomic_DNA"/>
</dbReference>
<dbReference type="SMR" id="Q136G5"/>
<dbReference type="STRING" id="316057.RPD_2796"/>
<dbReference type="KEGG" id="rpd:RPD_2796"/>
<dbReference type="eggNOG" id="COG0232">
    <property type="taxonomic scope" value="Bacteria"/>
</dbReference>
<dbReference type="HOGENOM" id="CLU_028163_1_0_5"/>
<dbReference type="BioCyc" id="RPAL316057:RPD_RS14045-MONOMER"/>
<dbReference type="Proteomes" id="UP000001818">
    <property type="component" value="Chromosome"/>
</dbReference>
<dbReference type="GO" id="GO:0008832">
    <property type="term" value="F:dGTPase activity"/>
    <property type="evidence" value="ECO:0007669"/>
    <property type="project" value="TreeGrafter"/>
</dbReference>
<dbReference type="GO" id="GO:0006203">
    <property type="term" value="P:dGTP catabolic process"/>
    <property type="evidence" value="ECO:0007669"/>
    <property type="project" value="TreeGrafter"/>
</dbReference>
<dbReference type="CDD" id="cd00077">
    <property type="entry name" value="HDc"/>
    <property type="match status" value="1"/>
</dbReference>
<dbReference type="Gene3D" id="1.10.3210.10">
    <property type="entry name" value="Hypothetical protein af1432"/>
    <property type="match status" value="1"/>
</dbReference>
<dbReference type="HAMAP" id="MF_01212">
    <property type="entry name" value="dGTPase_type2"/>
    <property type="match status" value="1"/>
</dbReference>
<dbReference type="InterPro" id="IPR006261">
    <property type="entry name" value="dGTPase"/>
</dbReference>
<dbReference type="InterPro" id="IPR050135">
    <property type="entry name" value="dGTPase-like"/>
</dbReference>
<dbReference type="InterPro" id="IPR023023">
    <property type="entry name" value="dNTPase_2"/>
</dbReference>
<dbReference type="InterPro" id="IPR003607">
    <property type="entry name" value="HD/PDEase_dom"/>
</dbReference>
<dbReference type="InterPro" id="IPR006674">
    <property type="entry name" value="HD_domain"/>
</dbReference>
<dbReference type="InterPro" id="IPR026875">
    <property type="entry name" value="PHydrolase_assoc_dom"/>
</dbReference>
<dbReference type="NCBIfam" id="TIGR01353">
    <property type="entry name" value="dGTP_triPase"/>
    <property type="match status" value="1"/>
</dbReference>
<dbReference type="NCBIfam" id="NF002326">
    <property type="entry name" value="PRK01286.1-1"/>
    <property type="match status" value="1"/>
</dbReference>
<dbReference type="NCBIfam" id="NF002328">
    <property type="entry name" value="PRK01286.1-3"/>
    <property type="match status" value="1"/>
</dbReference>
<dbReference type="PANTHER" id="PTHR11373:SF43">
    <property type="entry name" value="DEOXYGUANOSINETRIPHOSPHATE TRIPHOSPHOHYDROLASE-LIKE PROTEIN"/>
    <property type="match status" value="1"/>
</dbReference>
<dbReference type="PANTHER" id="PTHR11373">
    <property type="entry name" value="DEOXYNUCLEOSIDE TRIPHOSPHATE TRIPHOSPHOHYDROLASE"/>
    <property type="match status" value="1"/>
</dbReference>
<dbReference type="Pfam" id="PF01966">
    <property type="entry name" value="HD"/>
    <property type="match status" value="1"/>
</dbReference>
<dbReference type="Pfam" id="PF13286">
    <property type="entry name" value="HD_assoc"/>
    <property type="match status" value="1"/>
</dbReference>
<dbReference type="SMART" id="SM00471">
    <property type="entry name" value="HDc"/>
    <property type="match status" value="1"/>
</dbReference>
<dbReference type="SUPFAM" id="SSF109604">
    <property type="entry name" value="HD-domain/PDEase-like"/>
    <property type="match status" value="1"/>
</dbReference>
<dbReference type="PROSITE" id="PS51831">
    <property type="entry name" value="HD"/>
    <property type="match status" value="1"/>
</dbReference>
<reference key="1">
    <citation type="submission" date="2006-03" db="EMBL/GenBank/DDBJ databases">
        <title>Complete sequence of Rhodopseudomonas palustris BisB5.</title>
        <authorList>
            <consortium name="US DOE Joint Genome Institute"/>
            <person name="Copeland A."/>
            <person name="Lucas S."/>
            <person name="Lapidus A."/>
            <person name="Barry K."/>
            <person name="Detter J.C."/>
            <person name="Glavina del Rio T."/>
            <person name="Hammon N."/>
            <person name="Israni S."/>
            <person name="Dalin E."/>
            <person name="Tice H."/>
            <person name="Pitluck S."/>
            <person name="Chain P."/>
            <person name="Malfatti S."/>
            <person name="Shin M."/>
            <person name="Vergez L."/>
            <person name="Schmutz J."/>
            <person name="Larimer F."/>
            <person name="Land M."/>
            <person name="Hauser L."/>
            <person name="Pelletier D.A."/>
            <person name="Kyrpides N."/>
            <person name="Lykidis A."/>
            <person name="Oda Y."/>
            <person name="Harwood C.S."/>
            <person name="Richardson P."/>
        </authorList>
    </citation>
    <scope>NUCLEOTIDE SEQUENCE [LARGE SCALE GENOMIC DNA]</scope>
    <source>
        <strain>BisB5</strain>
    </source>
</reference>
<proteinExistence type="inferred from homology"/>
<comment type="similarity">
    <text evidence="1">Belongs to the dGTPase family. Type 2 subfamily.</text>
</comment>
<keyword id="KW-0378">Hydrolase</keyword>
<gene>
    <name type="ordered locus">RPD_2796</name>
</gene>